<reference key="1">
    <citation type="submission" date="2006-12" db="EMBL/GenBank/DDBJ databases">
        <title>Complete sequence of chromosome of Mycobacterium sp. KMS.</title>
        <authorList>
            <consortium name="US DOE Joint Genome Institute"/>
            <person name="Copeland A."/>
            <person name="Lucas S."/>
            <person name="Lapidus A."/>
            <person name="Barry K."/>
            <person name="Detter J.C."/>
            <person name="Glavina del Rio T."/>
            <person name="Hammon N."/>
            <person name="Israni S."/>
            <person name="Dalin E."/>
            <person name="Tice H."/>
            <person name="Pitluck S."/>
            <person name="Kiss H."/>
            <person name="Brettin T."/>
            <person name="Bruce D."/>
            <person name="Han C."/>
            <person name="Tapia R."/>
            <person name="Gilna P."/>
            <person name="Schmutz J."/>
            <person name="Larimer F."/>
            <person name="Land M."/>
            <person name="Hauser L."/>
            <person name="Kyrpides N."/>
            <person name="Mikhailova N."/>
            <person name="Miller C.D."/>
            <person name="Richardson P."/>
        </authorList>
    </citation>
    <scope>NUCLEOTIDE SEQUENCE [LARGE SCALE GENOMIC DNA]</scope>
    <source>
        <strain>KMS</strain>
    </source>
</reference>
<organism>
    <name type="scientific">Mycobacterium sp. (strain KMS)</name>
    <dbReference type="NCBI Taxonomy" id="189918"/>
    <lineage>
        <taxon>Bacteria</taxon>
        <taxon>Bacillati</taxon>
        <taxon>Actinomycetota</taxon>
        <taxon>Actinomycetes</taxon>
        <taxon>Mycobacteriales</taxon>
        <taxon>Mycobacteriaceae</taxon>
        <taxon>Mycobacterium</taxon>
    </lineage>
</organism>
<gene>
    <name evidence="1" type="primary">hemE</name>
    <name type="ordered locus">Mkms_2258</name>
</gene>
<protein>
    <recommendedName>
        <fullName evidence="1">Uroporphyrinogen decarboxylase</fullName>
        <shortName evidence="1">UPD</shortName>
        <shortName evidence="1">URO-D</shortName>
        <ecNumber evidence="1">4.1.1.37</ecNumber>
    </recommendedName>
</protein>
<dbReference type="EC" id="4.1.1.37" evidence="1"/>
<dbReference type="EMBL" id="CP000518">
    <property type="protein sequence ID" value="ABL91456.1"/>
    <property type="molecule type" value="Genomic_DNA"/>
</dbReference>
<dbReference type="SMR" id="A1UF48"/>
<dbReference type="STRING" id="189918.Mkms_2258"/>
<dbReference type="KEGG" id="mkm:Mkms_2258"/>
<dbReference type="HOGENOM" id="CLU_040933_0_1_11"/>
<dbReference type="OrthoDB" id="9806656at2"/>
<dbReference type="UniPathway" id="UPA00251">
    <property type="reaction ID" value="UER00321"/>
</dbReference>
<dbReference type="GO" id="GO:0005829">
    <property type="term" value="C:cytosol"/>
    <property type="evidence" value="ECO:0007669"/>
    <property type="project" value="TreeGrafter"/>
</dbReference>
<dbReference type="GO" id="GO:0004853">
    <property type="term" value="F:uroporphyrinogen decarboxylase activity"/>
    <property type="evidence" value="ECO:0007669"/>
    <property type="project" value="UniProtKB-UniRule"/>
</dbReference>
<dbReference type="GO" id="GO:0006782">
    <property type="term" value="P:protoporphyrinogen IX biosynthetic process"/>
    <property type="evidence" value="ECO:0007669"/>
    <property type="project" value="UniProtKB-UniRule"/>
</dbReference>
<dbReference type="CDD" id="cd00717">
    <property type="entry name" value="URO-D"/>
    <property type="match status" value="1"/>
</dbReference>
<dbReference type="Gene3D" id="3.20.20.210">
    <property type="match status" value="1"/>
</dbReference>
<dbReference type="HAMAP" id="MF_00218">
    <property type="entry name" value="URO_D"/>
    <property type="match status" value="1"/>
</dbReference>
<dbReference type="InterPro" id="IPR038071">
    <property type="entry name" value="UROD/MetE-like_sf"/>
</dbReference>
<dbReference type="InterPro" id="IPR006361">
    <property type="entry name" value="Uroporphyrinogen_deCO2ase_HemE"/>
</dbReference>
<dbReference type="InterPro" id="IPR000257">
    <property type="entry name" value="Uroporphyrinogen_deCOase"/>
</dbReference>
<dbReference type="NCBIfam" id="TIGR01464">
    <property type="entry name" value="hemE"/>
    <property type="match status" value="1"/>
</dbReference>
<dbReference type="PANTHER" id="PTHR21091">
    <property type="entry name" value="METHYLTETRAHYDROFOLATE:HOMOCYSTEINE METHYLTRANSFERASE RELATED"/>
    <property type="match status" value="1"/>
</dbReference>
<dbReference type="PANTHER" id="PTHR21091:SF169">
    <property type="entry name" value="UROPORPHYRINOGEN DECARBOXYLASE"/>
    <property type="match status" value="1"/>
</dbReference>
<dbReference type="Pfam" id="PF01208">
    <property type="entry name" value="URO-D"/>
    <property type="match status" value="1"/>
</dbReference>
<dbReference type="SUPFAM" id="SSF51726">
    <property type="entry name" value="UROD/MetE-like"/>
    <property type="match status" value="1"/>
</dbReference>
<dbReference type="PROSITE" id="PS00906">
    <property type="entry name" value="UROD_1"/>
    <property type="match status" value="1"/>
</dbReference>
<dbReference type="PROSITE" id="PS00907">
    <property type="entry name" value="UROD_2"/>
    <property type="match status" value="1"/>
</dbReference>
<keyword id="KW-0963">Cytoplasm</keyword>
<keyword id="KW-0210">Decarboxylase</keyword>
<keyword id="KW-0456">Lyase</keyword>
<keyword id="KW-0627">Porphyrin biosynthesis</keyword>
<feature type="chain" id="PRO_1000023923" description="Uroporphyrinogen decarboxylase">
    <location>
        <begin position="1"/>
        <end position="354"/>
    </location>
</feature>
<feature type="binding site" evidence="1">
    <location>
        <begin position="30"/>
        <end position="34"/>
    </location>
    <ligand>
        <name>substrate</name>
    </ligand>
</feature>
<feature type="binding site" evidence="1">
    <location>
        <position position="79"/>
    </location>
    <ligand>
        <name>substrate</name>
    </ligand>
</feature>
<feature type="binding site" evidence="1">
    <location>
        <position position="154"/>
    </location>
    <ligand>
        <name>substrate</name>
    </ligand>
</feature>
<feature type="binding site" evidence="1">
    <location>
        <position position="209"/>
    </location>
    <ligand>
        <name>substrate</name>
    </ligand>
</feature>
<feature type="binding site" evidence="1">
    <location>
        <position position="333"/>
    </location>
    <ligand>
        <name>substrate</name>
    </ligand>
</feature>
<feature type="site" description="Transition state stabilizer" evidence="1">
    <location>
        <position position="79"/>
    </location>
</feature>
<comment type="function">
    <text evidence="1">Catalyzes the decarboxylation of four acetate groups of uroporphyrinogen-III to yield coproporphyrinogen-III.</text>
</comment>
<comment type="catalytic activity">
    <reaction evidence="1">
        <text>uroporphyrinogen III + 4 H(+) = coproporphyrinogen III + 4 CO2</text>
        <dbReference type="Rhea" id="RHEA:19865"/>
        <dbReference type="ChEBI" id="CHEBI:15378"/>
        <dbReference type="ChEBI" id="CHEBI:16526"/>
        <dbReference type="ChEBI" id="CHEBI:57308"/>
        <dbReference type="ChEBI" id="CHEBI:57309"/>
        <dbReference type="EC" id="4.1.1.37"/>
    </reaction>
</comment>
<comment type="pathway">
    <text evidence="1">Porphyrin-containing compound metabolism; protoporphyrin-IX biosynthesis; coproporphyrinogen-III from 5-aminolevulinate: step 4/4.</text>
</comment>
<comment type="subunit">
    <text evidence="1">Homodimer.</text>
</comment>
<comment type="subcellular location">
    <subcellularLocation>
        <location evidence="1">Cytoplasm</location>
    </subcellularLocation>
</comment>
<comment type="similarity">
    <text evidence="1">Belongs to the uroporphyrinogen decarboxylase family.</text>
</comment>
<sequence>MNTRRELPDSPYLAAARGRKPARVPVWFMRQAGRSLPEYRALRARNTMMQACFDADLITEITLQPVRRHGVDAAILFSDIVVPLRASGIALDIVPDVGPVIDHPVRTAADVAAIRPLERQTVEPVEQAVRMLTAALGDVPLIGFAGAPFTLASYLVEGGPSKHHEHTKAMMLGAPDTWHALMSALTDVTIAFLQAQVDAGVDAIQVFDSWAGTLSLADYRAYVLPHSARVFQALAPAGVPMTHFGVGTAELLGAMSEAIATSGAPGVVGVDWRTSLTDAAGRVERGSALQGNLDPVVLLAGWPVVERAVRAVVEDGRRAVDAGAAGHVFNLGHGVLPATDPEIVTATVELVHSL</sequence>
<proteinExistence type="inferred from homology"/>
<name>DCUP_MYCSK</name>
<evidence type="ECO:0000255" key="1">
    <source>
        <dbReference type="HAMAP-Rule" id="MF_00218"/>
    </source>
</evidence>
<accession>A1UF48</accession>